<organism>
    <name type="scientific">Chlamydomonas reinhardtii</name>
    <name type="common">Chlamydomonas smithii</name>
    <dbReference type="NCBI Taxonomy" id="3055"/>
    <lineage>
        <taxon>Eukaryota</taxon>
        <taxon>Viridiplantae</taxon>
        <taxon>Chlorophyta</taxon>
        <taxon>core chlorophytes</taxon>
        <taxon>Chlorophyceae</taxon>
        <taxon>CS clade</taxon>
        <taxon>Chlamydomonadales</taxon>
        <taxon>Chlamydomonadaceae</taxon>
        <taxon>Chlamydomonas</taxon>
    </lineage>
</organism>
<protein>
    <recommendedName>
        <fullName>Phosphoglycerate kinase, chloroplastic</fullName>
        <ecNumber evidence="1">2.7.2.3</ecNumber>
    </recommendedName>
</protein>
<comment type="catalytic activity">
    <reaction evidence="1">
        <text>(2R)-3-phosphoglycerate + ATP = (2R)-3-phospho-glyceroyl phosphate + ADP</text>
        <dbReference type="Rhea" id="RHEA:14801"/>
        <dbReference type="ChEBI" id="CHEBI:30616"/>
        <dbReference type="ChEBI" id="CHEBI:57604"/>
        <dbReference type="ChEBI" id="CHEBI:58272"/>
        <dbReference type="ChEBI" id="CHEBI:456216"/>
        <dbReference type="EC" id="2.7.2.3"/>
    </reaction>
</comment>
<comment type="cofactor">
    <cofactor evidence="1">
        <name>Mg(2+)</name>
        <dbReference type="ChEBI" id="CHEBI:18420"/>
    </cofactor>
</comment>
<comment type="pathway">
    <text>Carbohydrate biosynthesis; Calvin cycle.</text>
</comment>
<comment type="subunit">
    <text>Monomer.</text>
</comment>
<comment type="subcellular location">
    <subcellularLocation>
        <location>Plastid</location>
        <location>Chloroplast</location>
    </subcellularLocation>
</comment>
<comment type="similarity">
    <text evidence="4">Belongs to the phosphoglycerate kinase family.</text>
</comment>
<accession>P41758</accession>
<proteinExistence type="evidence at protein level"/>
<keyword id="KW-0067">ATP-binding</keyword>
<keyword id="KW-0113">Calvin cycle</keyword>
<keyword id="KW-0150">Chloroplast</keyword>
<keyword id="KW-0903">Direct protein sequencing</keyword>
<keyword id="KW-0418">Kinase</keyword>
<keyword id="KW-0460">Magnesium</keyword>
<keyword id="KW-0479">Metal-binding</keyword>
<keyword id="KW-0547">Nucleotide-binding</keyword>
<keyword id="KW-0934">Plastid</keyword>
<keyword id="KW-0808">Transferase</keyword>
<keyword id="KW-0809">Transit peptide</keyword>
<reference key="1">
    <citation type="journal article" date="1995" name="Plant Physiol.">
        <title>Purification and cDNA isolation of chloroplastic phosphoglycerate kinase from Chlamydomonas reinhardtii.</title>
        <authorList>
            <person name="Kitayama M."/>
            <person name="Togasaki R.K."/>
        </authorList>
    </citation>
    <scope>NUCLEOTIDE SEQUENCE [MRNA]</scope>
    <scope>PARTIAL PROTEIN SEQUENCE</scope>
</reference>
<dbReference type="EC" id="2.7.2.3" evidence="1"/>
<dbReference type="EMBL" id="U14912">
    <property type="protein sequence ID" value="AAA70082.1"/>
    <property type="molecule type" value="mRNA"/>
</dbReference>
<dbReference type="PIR" id="T08041">
    <property type="entry name" value="T08041"/>
</dbReference>
<dbReference type="SMR" id="P41758"/>
<dbReference type="PaxDb" id="3055-EDO98586"/>
<dbReference type="ProMEX" id="P41758"/>
<dbReference type="eggNOG" id="KOG1367">
    <property type="taxonomic scope" value="Eukaryota"/>
</dbReference>
<dbReference type="UniPathway" id="UPA00116"/>
<dbReference type="GO" id="GO:0009507">
    <property type="term" value="C:chloroplast"/>
    <property type="evidence" value="ECO:0007669"/>
    <property type="project" value="UniProtKB-SubCell"/>
</dbReference>
<dbReference type="GO" id="GO:0005524">
    <property type="term" value="F:ATP binding"/>
    <property type="evidence" value="ECO:0007669"/>
    <property type="project" value="UniProtKB-KW"/>
</dbReference>
<dbReference type="GO" id="GO:0046872">
    <property type="term" value="F:metal ion binding"/>
    <property type="evidence" value="ECO:0007669"/>
    <property type="project" value="UniProtKB-KW"/>
</dbReference>
<dbReference type="GO" id="GO:0004618">
    <property type="term" value="F:phosphoglycerate kinase activity"/>
    <property type="evidence" value="ECO:0007669"/>
    <property type="project" value="UniProtKB-EC"/>
</dbReference>
<dbReference type="GO" id="GO:0006096">
    <property type="term" value="P:glycolytic process"/>
    <property type="evidence" value="ECO:0007669"/>
    <property type="project" value="InterPro"/>
</dbReference>
<dbReference type="GO" id="GO:0019253">
    <property type="term" value="P:reductive pentose-phosphate cycle"/>
    <property type="evidence" value="ECO:0007669"/>
    <property type="project" value="UniProtKB-UniPathway"/>
</dbReference>
<dbReference type="CDD" id="cd00318">
    <property type="entry name" value="Phosphoglycerate_kinase"/>
    <property type="match status" value="1"/>
</dbReference>
<dbReference type="FunFam" id="3.40.50.1260:FF:000003">
    <property type="entry name" value="Phosphoglycerate kinase"/>
    <property type="match status" value="1"/>
</dbReference>
<dbReference type="FunFam" id="3.40.50.1260:FF:000006">
    <property type="entry name" value="Phosphoglycerate kinase"/>
    <property type="match status" value="1"/>
</dbReference>
<dbReference type="FunFam" id="3.40.50.1260:FF:000017">
    <property type="entry name" value="Phosphoglycerate kinase"/>
    <property type="match status" value="1"/>
</dbReference>
<dbReference type="Gene3D" id="3.40.50.1260">
    <property type="entry name" value="Phosphoglycerate kinase, N-terminal domain"/>
    <property type="match status" value="2"/>
</dbReference>
<dbReference type="HAMAP" id="MF_00145">
    <property type="entry name" value="Phosphoglyc_kinase"/>
    <property type="match status" value="1"/>
</dbReference>
<dbReference type="InterPro" id="IPR001576">
    <property type="entry name" value="Phosphoglycerate_kinase"/>
</dbReference>
<dbReference type="InterPro" id="IPR015911">
    <property type="entry name" value="Phosphoglycerate_kinase_CS"/>
</dbReference>
<dbReference type="InterPro" id="IPR015824">
    <property type="entry name" value="Phosphoglycerate_kinase_N"/>
</dbReference>
<dbReference type="InterPro" id="IPR036043">
    <property type="entry name" value="Phosphoglycerate_kinase_sf"/>
</dbReference>
<dbReference type="PANTHER" id="PTHR11406">
    <property type="entry name" value="PHOSPHOGLYCERATE KINASE"/>
    <property type="match status" value="1"/>
</dbReference>
<dbReference type="PANTHER" id="PTHR11406:SF23">
    <property type="entry name" value="PHOSPHOGLYCERATE KINASE 1, CHLOROPLASTIC-RELATED"/>
    <property type="match status" value="1"/>
</dbReference>
<dbReference type="Pfam" id="PF00162">
    <property type="entry name" value="PGK"/>
    <property type="match status" value="1"/>
</dbReference>
<dbReference type="PIRSF" id="PIRSF000724">
    <property type="entry name" value="Pgk"/>
    <property type="match status" value="1"/>
</dbReference>
<dbReference type="PRINTS" id="PR00477">
    <property type="entry name" value="PHGLYCKINASE"/>
</dbReference>
<dbReference type="SUPFAM" id="SSF53748">
    <property type="entry name" value="Phosphoglycerate kinase"/>
    <property type="match status" value="1"/>
</dbReference>
<dbReference type="PROSITE" id="PS00111">
    <property type="entry name" value="PGLYCERATE_KINASE"/>
    <property type="match status" value="1"/>
</dbReference>
<feature type="transit peptide" description="Chloroplast" evidence="3">
    <location>
        <begin position="1"/>
        <end position="60"/>
    </location>
</feature>
<feature type="chain" id="PRO_0000023890" description="Phosphoglycerate kinase, chloroplastic">
    <location>
        <begin position="61"/>
        <end position="461"/>
    </location>
</feature>
<feature type="binding site" evidence="1">
    <location>
        <position position="82"/>
    </location>
    <ligand>
        <name>(2R)-3-phosphoglycerate</name>
        <dbReference type="ChEBI" id="CHEBI:58272"/>
    </ligand>
</feature>
<feature type="binding site" evidence="2">
    <location>
        <position position="83"/>
    </location>
    <ligand>
        <name>(2R)-3-phosphoglycerate</name>
        <dbReference type="ChEBI" id="CHEBI:58272"/>
    </ligand>
</feature>
<feature type="binding site" evidence="2">
    <location>
        <position position="85"/>
    </location>
    <ligand>
        <name>(2R)-3-phosphoglycerate</name>
        <dbReference type="ChEBI" id="CHEBI:58272"/>
    </ligand>
</feature>
<feature type="binding site" evidence="2">
    <location>
        <position position="100"/>
    </location>
    <ligand>
        <name>(2R)-3-phosphoglycerate</name>
        <dbReference type="ChEBI" id="CHEBI:58272"/>
    </ligand>
</feature>
<feature type="binding site" evidence="1">
    <location>
        <position position="122"/>
    </location>
    <ligand>
        <name>(2R)-3-phosphoglycerate</name>
        <dbReference type="ChEBI" id="CHEBI:58272"/>
    </ligand>
</feature>
<feature type="binding site" evidence="2">
    <location>
        <position position="123"/>
    </location>
    <ligand>
        <name>(2R)-3-phosphoglycerate</name>
        <dbReference type="ChEBI" id="CHEBI:58272"/>
    </ligand>
</feature>
<feature type="binding site" evidence="1">
    <location>
        <position position="125"/>
    </location>
    <ligand>
        <name>(2R)-3-phosphoglycerate</name>
        <dbReference type="ChEBI" id="CHEBI:58272"/>
    </ligand>
</feature>
<feature type="binding site" evidence="2">
    <location>
        <position position="126"/>
    </location>
    <ligand>
        <name>(2R)-3-phosphoglycerate</name>
        <dbReference type="ChEBI" id="CHEBI:58272"/>
    </ligand>
</feature>
<feature type="binding site" evidence="2">
    <location>
        <position position="182"/>
    </location>
    <ligand>
        <name>(2R)-3-phosphoglycerate</name>
        <dbReference type="ChEBI" id="CHEBI:58272"/>
    </ligand>
</feature>
<feature type="binding site" evidence="1">
    <location>
        <position position="214"/>
    </location>
    <ligand>
        <name>(2R)-3-phosphoglycerate</name>
        <dbReference type="ChEBI" id="CHEBI:58272"/>
    </ligand>
</feature>
<feature type="binding site" evidence="2">
    <location>
        <position position="215"/>
    </location>
    <ligand>
        <name>(2R)-3-phosphoglycerate</name>
        <dbReference type="ChEBI" id="CHEBI:58272"/>
    </ligand>
</feature>
<feature type="binding site" evidence="1">
    <location>
        <position position="260"/>
    </location>
    <ligand>
        <name>ADP</name>
        <dbReference type="ChEBI" id="CHEBI:456216"/>
    </ligand>
</feature>
<feature type="binding site" evidence="1">
    <location>
        <position position="260"/>
    </location>
    <ligand>
        <name>CDP</name>
        <dbReference type="ChEBI" id="CHEBI:58069"/>
    </ligand>
</feature>
<feature type="binding site" evidence="2">
    <location>
        <position position="262"/>
    </location>
    <ligand>
        <name>AMP</name>
        <dbReference type="ChEBI" id="CHEBI:456215"/>
    </ligand>
</feature>
<feature type="binding site" evidence="2">
    <location>
        <position position="266"/>
    </location>
    <ligand>
        <name>AMP</name>
        <dbReference type="ChEBI" id="CHEBI:456215"/>
    </ligand>
</feature>
<feature type="binding site" evidence="2">
    <location>
        <position position="266"/>
    </location>
    <ligand>
        <name>ATP</name>
        <dbReference type="ChEBI" id="CHEBI:30616"/>
    </ligand>
</feature>
<feature type="binding site" evidence="1">
    <location>
        <position position="284"/>
    </location>
    <ligand>
        <name>ADP</name>
        <dbReference type="ChEBI" id="CHEBI:456216"/>
    </ligand>
</feature>
<feature type="binding site" evidence="1">
    <location>
        <position position="284"/>
    </location>
    <ligand>
        <name>CDP</name>
        <dbReference type="ChEBI" id="CHEBI:58069"/>
    </ligand>
</feature>
<feature type="binding site" evidence="2">
    <location>
        <position position="285"/>
    </location>
    <ligand>
        <name>AMP</name>
        <dbReference type="ChEBI" id="CHEBI:456215"/>
    </ligand>
</feature>
<feature type="binding site" evidence="2">
    <location>
        <position position="285"/>
    </location>
    <ligand>
        <name>ATP</name>
        <dbReference type="ChEBI" id="CHEBI:30616"/>
    </ligand>
</feature>
<feature type="binding site" evidence="2">
    <location>
        <position position="357"/>
    </location>
    <ligand>
        <name>AMP</name>
        <dbReference type="ChEBI" id="CHEBI:456215"/>
    </ligand>
</feature>
<feature type="binding site" evidence="2">
    <location>
        <position position="357"/>
    </location>
    <ligand>
        <name>ATP</name>
        <dbReference type="ChEBI" id="CHEBI:30616"/>
    </ligand>
</feature>
<feature type="binding site" evidence="1">
    <location>
        <position position="382"/>
    </location>
    <ligand>
        <name>CDP</name>
        <dbReference type="ChEBI" id="CHEBI:58069"/>
    </ligand>
</feature>
<feature type="binding site" evidence="1">
    <location>
        <position position="387"/>
    </location>
    <ligand>
        <name>ADP</name>
        <dbReference type="ChEBI" id="CHEBI:456216"/>
    </ligand>
</feature>
<feature type="binding site" evidence="1">
    <location>
        <position position="387"/>
    </location>
    <ligand>
        <name>CDP</name>
        <dbReference type="ChEBI" id="CHEBI:58069"/>
    </ligand>
</feature>
<feature type="binding site" evidence="2">
    <location>
        <position position="388"/>
    </location>
    <ligand>
        <name>AMP</name>
        <dbReference type="ChEBI" id="CHEBI:456215"/>
    </ligand>
</feature>
<feature type="binding site" evidence="2">
    <location>
        <position position="388"/>
    </location>
    <ligand>
        <name>ATP</name>
        <dbReference type="ChEBI" id="CHEBI:30616"/>
    </ligand>
</feature>
<feature type="binding site" evidence="2">
    <location>
        <position position="419"/>
    </location>
    <ligand>
        <name>ATP</name>
        <dbReference type="ChEBI" id="CHEBI:30616"/>
    </ligand>
</feature>
<feature type="binding site" evidence="2">
    <location>
        <position position="419"/>
    </location>
    <ligand>
        <name>Mg(2+)</name>
        <dbReference type="ChEBI" id="CHEBI:18420"/>
    </ligand>
</feature>
<feature type="binding site" evidence="2">
    <location>
        <position position="420"/>
    </location>
    <ligand>
        <name>ATP</name>
        <dbReference type="ChEBI" id="CHEBI:30616"/>
    </ligand>
</feature>
<evidence type="ECO:0000250" key="1">
    <source>
        <dbReference type="UniProtKB" id="P00558"/>
    </source>
</evidence>
<evidence type="ECO:0000250" key="2">
    <source>
        <dbReference type="UniProtKB" id="Q7SIB7"/>
    </source>
</evidence>
<evidence type="ECO:0000255" key="3"/>
<evidence type="ECO:0000305" key="4"/>
<name>PGKH_CHLRE</name>
<sequence length="461" mass="49008">MALSMKMRANARVSGRRVAAVAPRVVPFSSASSSVLRSGFALRCLWTSAAWAALASVVEAVKKSVGDLHKADLEGKRVFVRADLNVPLDKATLAITDDTRIRAAVPTLKYLLDNGAKVLLTSHLGRPKGGPEDKYRLTPVVARLSELLGKPVTKVDDCIGPEVEKAVGAMKNGELLLLENCRFYKEEEKNEPEFAKKLAANADLYVNDAFGTAHRAHASTEGVTKFLKPSVAGFLLQKELDYLDGAVSNPKRPFVAIVGGSKVSSKITVIEALMEKCDKIIIGGGMIFTFYKARALKVGSSLVEDDKIELAKKLEEMAKAKGVQLLLPTDVVVADKFDANANTQTVPITAIPDGWMGLDIGPDSVKTFNDALADAKTVVWNGPMGVFEFPQVRQRTVSIANTLAGLTPKGCITIIGGGDSVAAVEQAGVAEKMSHISTGGGASLELLEGKVLPGVAALDEK</sequence>